<accession>Q1IGA7</accession>
<feature type="chain" id="PRO_1000094571" description="3-dehydroquinate synthase">
    <location>
        <begin position="1"/>
        <end position="365"/>
    </location>
</feature>
<feature type="binding site" evidence="1">
    <location>
        <begin position="69"/>
        <end position="74"/>
    </location>
    <ligand>
        <name>NAD(+)</name>
        <dbReference type="ChEBI" id="CHEBI:57540"/>
    </ligand>
</feature>
<feature type="binding site" evidence="1">
    <location>
        <begin position="103"/>
        <end position="107"/>
    </location>
    <ligand>
        <name>NAD(+)</name>
        <dbReference type="ChEBI" id="CHEBI:57540"/>
    </ligand>
</feature>
<feature type="binding site" evidence="1">
    <location>
        <begin position="127"/>
        <end position="128"/>
    </location>
    <ligand>
        <name>NAD(+)</name>
        <dbReference type="ChEBI" id="CHEBI:57540"/>
    </ligand>
</feature>
<feature type="binding site" evidence="1">
    <location>
        <position position="140"/>
    </location>
    <ligand>
        <name>NAD(+)</name>
        <dbReference type="ChEBI" id="CHEBI:57540"/>
    </ligand>
</feature>
<feature type="binding site" evidence="1">
    <location>
        <position position="149"/>
    </location>
    <ligand>
        <name>NAD(+)</name>
        <dbReference type="ChEBI" id="CHEBI:57540"/>
    </ligand>
</feature>
<feature type="binding site" evidence="1">
    <location>
        <position position="182"/>
    </location>
    <ligand>
        <name>Zn(2+)</name>
        <dbReference type="ChEBI" id="CHEBI:29105"/>
    </ligand>
</feature>
<feature type="binding site" evidence="1">
    <location>
        <position position="245"/>
    </location>
    <ligand>
        <name>Zn(2+)</name>
        <dbReference type="ChEBI" id="CHEBI:29105"/>
    </ligand>
</feature>
<feature type="binding site" evidence="1">
    <location>
        <position position="262"/>
    </location>
    <ligand>
        <name>Zn(2+)</name>
        <dbReference type="ChEBI" id="CHEBI:29105"/>
    </ligand>
</feature>
<proteinExistence type="inferred from homology"/>
<name>AROB_PSEE4</name>
<keyword id="KW-0028">Amino-acid biosynthesis</keyword>
<keyword id="KW-0057">Aromatic amino acid biosynthesis</keyword>
<keyword id="KW-0170">Cobalt</keyword>
<keyword id="KW-0963">Cytoplasm</keyword>
<keyword id="KW-0456">Lyase</keyword>
<keyword id="KW-0479">Metal-binding</keyword>
<keyword id="KW-0520">NAD</keyword>
<keyword id="KW-0547">Nucleotide-binding</keyword>
<keyword id="KW-0862">Zinc</keyword>
<gene>
    <name evidence="1" type="primary">aroB</name>
    <name type="ordered locus">PSEEN0335</name>
</gene>
<organism>
    <name type="scientific">Pseudomonas entomophila (strain L48)</name>
    <dbReference type="NCBI Taxonomy" id="384676"/>
    <lineage>
        <taxon>Bacteria</taxon>
        <taxon>Pseudomonadati</taxon>
        <taxon>Pseudomonadota</taxon>
        <taxon>Gammaproteobacteria</taxon>
        <taxon>Pseudomonadales</taxon>
        <taxon>Pseudomonadaceae</taxon>
        <taxon>Pseudomonas</taxon>
    </lineage>
</organism>
<dbReference type="EC" id="4.2.3.4" evidence="1"/>
<dbReference type="EMBL" id="CT573326">
    <property type="protein sequence ID" value="CAK13295.1"/>
    <property type="molecule type" value="Genomic_DNA"/>
</dbReference>
<dbReference type="RefSeq" id="WP_011531755.1">
    <property type="nucleotide sequence ID" value="NC_008027.1"/>
</dbReference>
<dbReference type="SMR" id="Q1IGA7"/>
<dbReference type="STRING" id="384676.PSEEN0335"/>
<dbReference type="GeneID" id="32803676"/>
<dbReference type="KEGG" id="pen:PSEEN0335"/>
<dbReference type="eggNOG" id="COG0337">
    <property type="taxonomic scope" value="Bacteria"/>
</dbReference>
<dbReference type="HOGENOM" id="CLU_001201_0_2_6"/>
<dbReference type="OrthoDB" id="9806583at2"/>
<dbReference type="UniPathway" id="UPA00053">
    <property type="reaction ID" value="UER00085"/>
</dbReference>
<dbReference type="Proteomes" id="UP000000658">
    <property type="component" value="Chromosome"/>
</dbReference>
<dbReference type="GO" id="GO:0005737">
    <property type="term" value="C:cytoplasm"/>
    <property type="evidence" value="ECO:0007669"/>
    <property type="project" value="UniProtKB-SubCell"/>
</dbReference>
<dbReference type="GO" id="GO:0003856">
    <property type="term" value="F:3-dehydroquinate synthase activity"/>
    <property type="evidence" value="ECO:0007669"/>
    <property type="project" value="UniProtKB-UniRule"/>
</dbReference>
<dbReference type="GO" id="GO:0046872">
    <property type="term" value="F:metal ion binding"/>
    <property type="evidence" value="ECO:0007669"/>
    <property type="project" value="UniProtKB-KW"/>
</dbReference>
<dbReference type="GO" id="GO:0000166">
    <property type="term" value="F:nucleotide binding"/>
    <property type="evidence" value="ECO:0007669"/>
    <property type="project" value="UniProtKB-KW"/>
</dbReference>
<dbReference type="GO" id="GO:0008652">
    <property type="term" value="P:amino acid biosynthetic process"/>
    <property type="evidence" value="ECO:0007669"/>
    <property type="project" value="UniProtKB-KW"/>
</dbReference>
<dbReference type="GO" id="GO:0009073">
    <property type="term" value="P:aromatic amino acid family biosynthetic process"/>
    <property type="evidence" value="ECO:0007669"/>
    <property type="project" value="UniProtKB-KW"/>
</dbReference>
<dbReference type="GO" id="GO:0009423">
    <property type="term" value="P:chorismate biosynthetic process"/>
    <property type="evidence" value="ECO:0007669"/>
    <property type="project" value="UniProtKB-UniRule"/>
</dbReference>
<dbReference type="CDD" id="cd08195">
    <property type="entry name" value="DHQS"/>
    <property type="match status" value="1"/>
</dbReference>
<dbReference type="FunFam" id="1.20.1090.10:FF:000002">
    <property type="entry name" value="3-dehydroquinate synthase"/>
    <property type="match status" value="1"/>
</dbReference>
<dbReference type="FunFam" id="3.40.50.1970:FF:000001">
    <property type="entry name" value="3-dehydroquinate synthase"/>
    <property type="match status" value="1"/>
</dbReference>
<dbReference type="Gene3D" id="3.40.50.1970">
    <property type="match status" value="1"/>
</dbReference>
<dbReference type="Gene3D" id="1.20.1090.10">
    <property type="entry name" value="Dehydroquinate synthase-like - alpha domain"/>
    <property type="match status" value="1"/>
</dbReference>
<dbReference type="HAMAP" id="MF_00110">
    <property type="entry name" value="DHQ_synthase"/>
    <property type="match status" value="1"/>
</dbReference>
<dbReference type="InterPro" id="IPR050071">
    <property type="entry name" value="Dehydroquinate_synthase"/>
</dbReference>
<dbReference type="InterPro" id="IPR016037">
    <property type="entry name" value="DHQ_synth_AroB"/>
</dbReference>
<dbReference type="InterPro" id="IPR030963">
    <property type="entry name" value="DHQ_synth_fam"/>
</dbReference>
<dbReference type="InterPro" id="IPR030960">
    <property type="entry name" value="DHQS/DOIS_N"/>
</dbReference>
<dbReference type="InterPro" id="IPR056179">
    <property type="entry name" value="DHQS_C"/>
</dbReference>
<dbReference type="NCBIfam" id="TIGR01357">
    <property type="entry name" value="aroB"/>
    <property type="match status" value="1"/>
</dbReference>
<dbReference type="PANTHER" id="PTHR43622">
    <property type="entry name" value="3-DEHYDROQUINATE SYNTHASE"/>
    <property type="match status" value="1"/>
</dbReference>
<dbReference type="PANTHER" id="PTHR43622:SF7">
    <property type="entry name" value="3-DEHYDROQUINATE SYNTHASE, CHLOROPLASTIC"/>
    <property type="match status" value="1"/>
</dbReference>
<dbReference type="Pfam" id="PF01761">
    <property type="entry name" value="DHQ_synthase"/>
    <property type="match status" value="1"/>
</dbReference>
<dbReference type="Pfam" id="PF24621">
    <property type="entry name" value="DHQS_C"/>
    <property type="match status" value="1"/>
</dbReference>
<dbReference type="PIRSF" id="PIRSF001455">
    <property type="entry name" value="DHQ_synth"/>
    <property type="match status" value="1"/>
</dbReference>
<dbReference type="SUPFAM" id="SSF56796">
    <property type="entry name" value="Dehydroquinate synthase-like"/>
    <property type="match status" value="1"/>
</dbReference>
<reference key="1">
    <citation type="journal article" date="2006" name="Nat. Biotechnol.">
        <title>Complete genome sequence of the entomopathogenic and metabolically versatile soil bacterium Pseudomonas entomophila.</title>
        <authorList>
            <person name="Vodovar N."/>
            <person name="Vallenet D."/>
            <person name="Cruveiller S."/>
            <person name="Rouy Z."/>
            <person name="Barbe V."/>
            <person name="Acosta C."/>
            <person name="Cattolico L."/>
            <person name="Jubin C."/>
            <person name="Lajus A."/>
            <person name="Segurens B."/>
            <person name="Vacherie B."/>
            <person name="Wincker P."/>
            <person name="Weissenbach J."/>
            <person name="Lemaitre B."/>
            <person name="Medigue C."/>
            <person name="Boccard F."/>
        </authorList>
    </citation>
    <scope>NUCLEOTIDE SEQUENCE [LARGE SCALE GENOMIC DNA]</scope>
    <source>
        <strain>L48</strain>
    </source>
</reference>
<evidence type="ECO:0000255" key="1">
    <source>
        <dbReference type="HAMAP-Rule" id="MF_00110"/>
    </source>
</evidence>
<comment type="function">
    <text evidence="1">Catalyzes the conversion of 3-deoxy-D-arabino-heptulosonate 7-phosphate (DAHP) to dehydroquinate (DHQ).</text>
</comment>
<comment type="catalytic activity">
    <reaction evidence="1">
        <text>7-phospho-2-dehydro-3-deoxy-D-arabino-heptonate = 3-dehydroquinate + phosphate</text>
        <dbReference type="Rhea" id="RHEA:21968"/>
        <dbReference type="ChEBI" id="CHEBI:32364"/>
        <dbReference type="ChEBI" id="CHEBI:43474"/>
        <dbReference type="ChEBI" id="CHEBI:58394"/>
        <dbReference type="EC" id="4.2.3.4"/>
    </reaction>
</comment>
<comment type="cofactor">
    <cofactor evidence="1">
        <name>Co(2+)</name>
        <dbReference type="ChEBI" id="CHEBI:48828"/>
    </cofactor>
    <cofactor evidence="1">
        <name>Zn(2+)</name>
        <dbReference type="ChEBI" id="CHEBI:29105"/>
    </cofactor>
    <text evidence="1">Binds 1 divalent metal cation per subunit. Can use either Co(2+) or Zn(2+).</text>
</comment>
<comment type="cofactor">
    <cofactor evidence="1">
        <name>NAD(+)</name>
        <dbReference type="ChEBI" id="CHEBI:57540"/>
    </cofactor>
</comment>
<comment type="pathway">
    <text evidence="1">Metabolic intermediate biosynthesis; chorismate biosynthesis; chorismate from D-erythrose 4-phosphate and phosphoenolpyruvate: step 2/7.</text>
</comment>
<comment type="subcellular location">
    <subcellularLocation>
        <location evidence="1">Cytoplasm</location>
    </subcellularLocation>
</comment>
<comment type="similarity">
    <text evidence="1">Belongs to the sugar phosphate cyclases superfamily. Dehydroquinate synthase family.</text>
</comment>
<sequence>MQTLKVDLGERSYPIYIGEGLLDQPELLAPHIAGRQVAIVSNETVAPLYLERLSKTLGAYSVLPVVLPDGEKYKNWETLQLVFDALLSARHDRRTTVVALGGGVIGDMAGFAAACYQRGVDFIQVPTTLLSQVDSSVGGKTGINHPLGKNMVGAFYQPNAVLIDTTSLKTLPQRELSAGLAEIIKYGLICDEPFLGWLEDNMQALRALEPVALTEAIRRSCAAKAAVVGADERESGVRATLNLGHTFGHAIETHMGYGVWLHGEAVAAGTVMALEMSMRLGWIDQPARDRGIRLLQDAGLPVVPPQEMTPAHFMEHMAVDKKVLDGRLRLVLLRQMGEAVVTDDYPKEILQATLAADYRAIVAQL</sequence>
<protein>
    <recommendedName>
        <fullName evidence="1">3-dehydroquinate synthase</fullName>
        <shortName evidence="1">DHQS</shortName>
        <ecNumber evidence="1">4.2.3.4</ecNumber>
    </recommendedName>
</protein>